<accession>A0A0H2XIV9</accession>
<proteinExistence type="evidence at protein level"/>
<gene>
    <name evidence="7" type="primary">essD</name>
    <name evidence="6" type="synonym">esaD</name>
    <name evidence="9" type="ordered locus">SAUSA300_0288</name>
</gene>
<reference key="1">
    <citation type="journal article" date="2006" name="Lancet">
        <title>Complete genome sequence of USA300, an epidemic clone of community-acquired meticillin-resistant Staphylococcus aureus.</title>
        <authorList>
            <person name="Diep B.A."/>
            <person name="Gill S.R."/>
            <person name="Chang R.F."/>
            <person name="Phan T.H."/>
            <person name="Chen J.H."/>
            <person name="Davidson M.G."/>
            <person name="Lin F."/>
            <person name="Lin J."/>
            <person name="Carleton H.A."/>
            <person name="Mongodin E.F."/>
            <person name="Sensabaugh G.F."/>
            <person name="Perdreau-Remington F."/>
        </authorList>
    </citation>
    <scope>NUCLEOTIDE SEQUENCE [LARGE SCALE GENOMIC DNA]</scope>
    <source>
        <strain>USA300</strain>
    </source>
</reference>
<reference key="2">
    <citation type="journal article" date="2011" name="J. Bacteriol.">
        <title>EsaD, a secretion factor for the Ess pathway in Staphylococcus aureus.</title>
        <authorList>
            <person name="Anderson M."/>
            <person name="Chen Y.H."/>
            <person name="Butler E.K."/>
            <person name="Missiakas D.M."/>
        </authorList>
    </citation>
    <scope>FUNCTION IN VIRULENCE</scope>
    <scope>SUBCELLULAR LOCATION</scope>
    <scope>DISRUPTION PHENOTYPE</scope>
    <source>
        <strain>USA300</strain>
    </source>
</reference>
<reference key="3">
    <citation type="journal article" date="2013" name="Mol. Microbiol.">
        <title>Secretion of atypical protein substrates by the ESAT-6 secretion system of Staphylococcus aureus.</title>
        <authorList>
            <person name="Anderson M."/>
            <person name="Aly K.A."/>
            <person name="Chen Y.H."/>
            <person name="Missiakas D."/>
        </authorList>
    </citation>
    <scope>FUNCTION</scope>
    <scope>GENE NAME</scope>
    <scope>DISRUPTION PHENOTYPE</scope>
    <source>
        <strain>USA300</strain>
    </source>
</reference>
<reference key="4">
    <citation type="journal article" date="2017" name="J. Bacteriol.">
        <title>EssE Promotes Staphylococcus aureus ESS-Dependent Protein Secretion To Modify Host Immune Responses during Infection.</title>
        <authorList>
            <person name="Anderson M."/>
            <person name="Ohr R.J."/>
            <person name="Aly K.A."/>
            <person name="Nocadello S."/>
            <person name="Kim H.K."/>
            <person name="Schneewind C.E."/>
            <person name="Schneewind O."/>
            <person name="Missiakas D."/>
        </authorList>
    </citation>
    <scope>INTERACTION WITH ESSE</scope>
    <scope>FUNCTION</scope>
    <source>
        <strain>USA300</strain>
    </source>
</reference>
<evidence type="ECO:0000250" key="1">
    <source>
        <dbReference type="UniProtKB" id="Q2G179"/>
    </source>
</evidence>
<evidence type="ECO:0000256" key="2">
    <source>
        <dbReference type="SAM" id="MobiDB-lite"/>
    </source>
</evidence>
<evidence type="ECO:0000269" key="3">
    <source>
    </source>
</evidence>
<evidence type="ECO:0000269" key="4">
    <source>
    </source>
</evidence>
<evidence type="ECO:0000269" key="5">
    <source>
    </source>
</evidence>
<evidence type="ECO:0000303" key="6">
    <source>
    </source>
</evidence>
<evidence type="ECO:0000303" key="7">
    <source>
    </source>
</evidence>
<evidence type="ECO:0000305" key="8"/>
<evidence type="ECO:0000312" key="9">
    <source>
        <dbReference type="EMBL" id="ABD22684.1"/>
    </source>
</evidence>
<protein>
    <recommendedName>
        <fullName evidence="8">Type VII secretion system protein EssD</fullName>
    </recommendedName>
    <alternativeName>
        <fullName evidence="6">Ess-associated gene D</fullName>
    </alternativeName>
    <alternativeName>
        <fullName>Nuclease toxin EssD</fullName>
    </alternativeName>
</protein>
<keyword id="KW-1003">Cell membrane</keyword>
<keyword id="KW-0472">Membrane</keyword>
<keyword id="KW-0964">Secreted</keyword>
<keyword id="KW-0843">Virulence</keyword>
<name>ESSD_STAA3</name>
<dbReference type="EMBL" id="CP000255">
    <property type="protein sequence ID" value="ABD22684.1"/>
    <property type="molecule type" value="Genomic_DNA"/>
</dbReference>
<dbReference type="RefSeq" id="WP_000159025.1">
    <property type="nucleotide sequence ID" value="NZ_CP027476.1"/>
</dbReference>
<dbReference type="SMR" id="A0A0H2XIV9"/>
<dbReference type="KEGG" id="saa:SAUSA300_0288"/>
<dbReference type="HOGENOM" id="CLU_031044_1_0_9"/>
<dbReference type="OMA" id="NNYAQKT"/>
<dbReference type="Proteomes" id="UP000001939">
    <property type="component" value="Chromosome"/>
</dbReference>
<dbReference type="GO" id="GO:0005576">
    <property type="term" value="C:extracellular region"/>
    <property type="evidence" value="ECO:0007669"/>
    <property type="project" value="UniProtKB-SubCell"/>
</dbReference>
<dbReference type="GO" id="GO:0005886">
    <property type="term" value="C:plasma membrane"/>
    <property type="evidence" value="ECO:0007669"/>
    <property type="project" value="UniProtKB-SubCell"/>
</dbReference>
<dbReference type="Gene3D" id="3.40.570.10">
    <property type="entry name" value="Extracellular Endonuclease, subunit A"/>
    <property type="match status" value="1"/>
</dbReference>
<dbReference type="InterPro" id="IPR051768">
    <property type="entry name" value="Bact_secretion_toxin"/>
</dbReference>
<dbReference type="InterPro" id="IPR044929">
    <property type="entry name" value="DNA/RNA_non-sp_Endonuclease_sf"/>
</dbReference>
<dbReference type="InterPro" id="IPR044927">
    <property type="entry name" value="Endonuclea_NS_2"/>
</dbReference>
<dbReference type="InterPro" id="IPR027797">
    <property type="entry name" value="PT-TG_dom"/>
</dbReference>
<dbReference type="PANTHER" id="PTHR34976">
    <property type="entry name" value="RIBONUCLEASE YQCG-RELATED"/>
    <property type="match status" value="1"/>
</dbReference>
<dbReference type="PANTHER" id="PTHR34976:SF2">
    <property type="entry name" value="TYPE VII SECRETION SYSTEM PROTEIN ESSD"/>
    <property type="match status" value="1"/>
</dbReference>
<dbReference type="Pfam" id="PF13930">
    <property type="entry name" value="Endonuclea_NS_2"/>
    <property type="match status" value="1"/>
</dbReference>
<dbReference type="Pfam" id="PF14449">
    <property type="entry name" value="PT-TG"/>
    <property type="match status" value="1"/>
</dbReference>
<comment type="function">
    <text evidence="1 3 4 5">Component of the type VII secretion system (Ess) (Probable). Plays a role in Ess secretion during infection. Required for the efficient secretion of EsxA. Required for abscess formation and staphylococcal persistence in host tissues (PubMed:21278286, PubMed:24033479, PubMed:27795322). Possesses a toxic DNase activity that is modulated by EsaG by forming a nuclease toxin-antitoxin pair. This nuclease toxin targets competitor bacteria (By similarity).</text>
</comment>
<comment type="subunit">
    <text evidence="1 5">Interacts (via C-terminal) with EssG; this interaction blocks EssD activity (By similarity). Interacts with EssE (PubMed:27795322).</text>
</comment>
<comment type="subcellular location">
    <subcellularLocation>
        <location>Secreted</location>
    </subcellularLocation>
    <subcellularLocation>
        <location evidence="3">Cell membrane</location>
    </subcellularLocation>
    <text evidence="1">Released from the cell in a form that is immediately active while EssG partner protein remains in the producing cell where it may potentially serve further protective functions.</text>
</comment>
<comment type="disruption phenotype">
    <text evidence="3 4">Deletions mutants are defective in the secretion of EsxA, EsxB, EsxC and EsxD.</text>
</comment>
<comment type="similarity">
    <text evidence="8">Belongs to the EssD family.</text>
</comment>
<sequence>MTKDIEYLTADYDNEKSSIQSVIDAIEGQDFLDVDTTMDDAVSDVSSLDEDGAISLTSSVVGPQGSKLMGYYQNELYDYASQLDSKMKEIIDTPFIEDIDKAFKGITNVKLENILIKNGGGHGRDTYGASGKIAKGDAKKSDSDVYSIDEILKSDQEFVKVIDQHYKEMKKEDKKLSKSDFEKMMTQGASCDYMTVAEAEELEEQKKKEEAIEIAALAGMVVLSCINPVAGAVAIGAYSAYSAANAATGKNIVTGRKLSKEERIMEGLSLIPLPGMGFLKGAGKSLMKLGFKGGEKFAVKTGLQKTMQQAVSRISPKMGMMKNSVLNQSRNFAQNTHVGQMLSNMRGQATHTVQQSRNWIGQQAQNVKRIVNNGLDKEIAHPFKQQLAPAGMGGIKFAETTTLRNMGQNIKRAVTPQNHVTHGPKDSMVRSEGKHSISSHEMNSSKYVESPNYTKVEFGEHYARLRPKKLKANIEYTTPTGHIYRTDHKGRIKEVYVDNLSLKDGDRNSHAQRTVGGEDRLPDDDGGHLIARMFGGSKDIDNLVAQSKFINRPFKEKGHWYNLEKEWQEFLNSGKEVKNIKMEVKYSGNSQRPTIFKVEYEINGERNIRRILNK</sequence>
<organism>
    <name type="scientific">Staphylococcus aureus (strain USA300)</name>
    <dbReference type="NCBI Taxonomy" id="367830"/>
    <lineage>
        <taxon>Bacteria</taxon>
        <taxon>Bacillati</taxon>
        <taxon>Bacillota</taxon>
        <taxon>Bacilli</taxon>
        <taxon>Bacillales</taxon>
        <taxon>Staphylococcaceae</taxon>
        <taxon>Staphylococcus</taxon>
    </lineage>
</organism>
<feature type="chain" id="PRO_0000437417" description="Type VII secretion system protein EssD">
    <location>
        <begin position="1"/>
        <end position="614"/>
    </location>
</feature>
<feature type="region of interest" description="Disordered" evidence="2">
    <location>
        <begin position="417"/>
        <end position="445"/>
    </location>
</feature>
<feature type="compositionally biased region" description="Basic and acidic residues" evidence="2">
    <location>
        <begin position="423"/>
        <end position="435"/>
    </location>
</feature>